<reference key="1">
    <citation type="journal article" date="2004" name="Nucleic Acids Res.">
        <title>Thermoadaptation trait revealed by the genome sequence of thermophilic Geobacillus kaustophilus.</title>
        <authorList>
            <person name="Takami H."/>
            <person name="Takaki Y."/>
            <person name="Chee G.-J."/>
            <person name="Nishi S."/>
            <person name="Shimamura S."/>
            <person name="Suzuki H."/>
            <person name="Matsui S."/>
            <person name="Uchiyama I."/>
        </authorList>
    </citation>
    <scope>NUCLEOTIDE SEQUENCE [LARGE SCALE GENOMIC DNA]</scope>
    <source>
        <strain>HTA426</strain>
    </source>
</reference>
<protein>
    <recommendedName>
        <fullName evidence="1">Serine--tRNA ligase</fullName>
        <ecNumber evidence="1">6.1.1.11</ecNumber>
    </recommendedName>
    <alternativeName>
        <fullName evidence="1">Seryl-tRNA synthetase</fullName>
        <shortName evidence="1">SerRS</shortName>
    </alternativeName>
    <alternativeName>
        <fullName evidence="1">Seryl-tRNA(Ser/Sec) synthetase</fullName>
    </alternativeName>
</protein>
<organism>
    <name type="scientific">Geobacillus kaustophilus (strain HTA426)</name>
    <dbReference type="NCBI Taxonomy" id="235909"/>
    <lineage>
        <taxon>Bacteria</taxon>
        <taxon>Bacillati</taxon>
        <taxon>Bacillota</taxon>
        <taxon>Bacilli</taxon>
        <taxon>Bacillales</taxon>
        <taxon>Anoxybacillaceae</taxon>
        <taxon>Geobacillus</taxon>
        <taxon>Geobacillus thermoleovorans group</taxon>
    </lineage>
</organism>
<feature type="chain" id="PRO_0000122052" description="Serine--tRNA ligase">
    <location>
        <begin position="1"/>
        <end position="424"/>
    </location>
</feature>
<feature type="binding site" evidence="1">
    <location>
        <begin position="231"/>
        <end position="233"/>
    </location>
    <ligand>
        <name>L-serine</name>
        <dbReference type="ChEBI" id="CHEBI:33384"/>
    </ligand>
</feature>
<feature type="binding site" evidence="1">
    <location>
        <begin position="262"/>
        <end position="264"/>
    </location>
    <ligand>
        <name>ATP</name>
        <dbReference type="ChEBI" id="CHEBI:30616"/>
    </ligand>
</feature>
<feature type="binding site" evidence="1">
    <location>
        <position position="285"/>
    </location>
    <ligand>
        <name>L-serine</name>
        <dbReference type="ChEBI" id="CHEBI:33384"/>
    </ligand>
</feature>
<feature type="binding site" evidence="1">
    <location>
        <begin position="349"/>
        <end position="352"/>
    </location>
    <ligand>
        <name>ATP</name>
        <dbReference type="ChEBI" id="CHEBI:30616"/>
    </ligand>
</feature>
<feature type="binding site" evidence="1">
    <location>
        <position position="385"/>
    </location>
    <ligand>
        <name>L-serine</name>
        <dbReference type="ChEBI" id="CHEBI:33384"/>
    </ligand>
</feature>
<name>SYS_GEOKA</name>
<keyword id="KW-0030">Aminoacyl-tRNA synthetase</keyword>
<keyword id="KW-0067">ATP-binding</keyword>
<keyword id="KW-0963">Cytoplasm</keyword>
<keyword id="KW-0436">Ligase</keyword>
<keyword id="KW-0547">Nucleotide-binding</keyword>
<keyword id="KW-0648">Protein biosynthesis</keyword>
<keyword id="KW-1185">Reference proteome</keyword>
<comment type="function">
    <text evidence="1">Catalyzes the attachment of serine to tRNA(Ser). Is also able to aminoacylate tRNA(Sec) with serine, to form the misacylated tRNA L-seryl-tRNA(Sec), which will be further converted into selenocysteinyl-tRNA(Sec).</text>
</comment>
<comment type="catalytic activity">
    <reaction evidence="1">
        <text>tRNA(Ser) + L-serine + ATP = L-seryl-tRNA(Ser) + AMP + diphosphate + H(+)</text>
        <dbReference type="Rhea" id="RHEA:12292"/>
        <dbReference type="Rhea" id="RHEA-COMP:9669"/>
        <dbReference type="Rhea" id="RHEA-COMP:9703"/>
        <dbReference type="ChEBI" id="CHEBI:15378"/>
        <dbReference type="ChEBI" id="CHEBI:30616"/>
        <dbReference type="ChEBI" id="CHEBI:33019"/>
        <dbReference type="ChEBI" id="CHEBI:33384"/>
        <dbReference type="ChEBI" id="CHEBI:78442"/>
        <dbReference type="ChEBI" id="CHEBI:78533"/>
        <dbReference type="ChEBI" id="CHEBI:456215"/>
        <dbReference type="EC" id="6.1.1.11"/>
    </reaction>
</comment>
<comment type="catalytic activity">
    <reaction evidence="1">
        <text>tRNA(Sec) + L-serine + ATP = L-seryl-tRNA(Sec) + AMP + diphosphate + H(+)</text>
        <dbReference type="Rhea" id="RHEA:42580"/>
        <dbReference type="Rhea" id="RHEA-COMP:9742"/>
        <dbReference type="Rhea" id="RHEA-COMP:10128"/>
        <dbReference type="ChEBI" id="CHEBI:15378"/>
        <dbReference type="ChEBI" id="CHEBI:30616"/>
        <dbReference type="ChEBI" id="CHEBI:33019"/>
        <dbReference type="ChEBI" id="CHEBI:33384"/>
        <dbReference type="ChEBI" id="CHEBI:78442"/>
        <dbReference type="ChEBI" id="CHEBI:78533"/>
        <dbReference type="ChEBI" id="CHEBI:456215"/>
        <dbReference type="EC" id="6.1.1.11"/>
    </reaction>
</comment>
<comment type="pathway">
    <text evidence="1">Aminoacyl-tRNA biosynthesis; selenocysteinyl-tRNA(Sec) biosynthesis; L-seryl-tRNA(Sec) from L-serine and tRNA(Sec): step 1/1.</text>
</comment>
<comment type="subunit">
    <text evidence="1">Homodimer. The tRNA molecule binds across the dimer.</text>
</comment>
<comment type="subcellular location">
    <subcellularLocation>
        <location evidence="1">Cytoplasm</location>
    </subcellularLocation>
</comment>
<comment type="domain">
    <text evidence="1">Consists of two distinct domains, a catalytic core and a N-terminal extension that is involved in tRNA binding.</text>
</comment>
<comment type="similarity">
    <text evidence="1">Belongs to the class-II aminoacyl-tRNA synthetase family. Type-1 seryl-tRNA synthetase subfamily.</text>
</comment>
<evidence type="ECO:0000255" key="1">
    <source>
        <dbReference type="HAMAP-Rule" id="MF_00176"/>
    </source>
</evidence>
<proteinExistence type="inferred from homology"/>
<sequence>MLDVKILRTQFEEVKEKLMQRGGDLTNIDRFEQLDKDRRRLIAEVEELKSKRNDVSQQIAVLKREKKDAEPLIAQMREVGDRIKRMDEQIRQLEAELDDLLLSIPNVPHESVPIGQSEEDNVEVRRWGEPRSFSFEPKPHWEIADRLGLLDFERAAKVAGSRFVFYKGLGARLERALINFMLDIHLDEFGYEEVLPPYLVNRASMIGTGQLPKFAEDAFHLDSEDYFLIPTAEVPVTNLHRDEILAADDLPIYYAAYSACFRAEAGSAGRDTRGLIRQHQFNKVELVKFVKPEDSYDELEKLTRQAETILQRLGLPYRVVALCTGDLGFSAAKTYDIEVWLPSYGTYREISSCSNFEAFQARRANIRFRRDPKAKPEYVHTLNGSGLAIGRTVAAILENYQQEDGSVIVPEALRPYMGNRDVIR</sequence>
<accession>Q5L3Y0</accession>
<gene>
    <name evidence="1" type="primary">serS</name>
    <name type="ordered locus">GK0013</name>
</gene>
<dbReference type="EC" id="6.1.1.11" evidence="1"/>
<dbReference type="EMBL" id="BA000043">
    <property type="protein sequence ID" value="BAD74298.1"/>
    <property type="molecule type" value="Genomic_DNA"/>
</dbReference>
<dbReference type="RefSeq" id="WP_011229529.1">
    <property type="nucleotide sequence ID" value="NC_006510.1"/>
</dbReference>
<dbReference type="SMR" id="Q5L3Y0"/>
<dbReference type="STRING" id="235909.GK0013"/>
<dbReference type="GeneID" id="32065394"/>
<dbReference type="KEGG" id="gka:GK0013"/>
<dbReference type="eggNOG" id="COG0172">
    <property type="taxonomic scope" value="Bacteria"/>
</dbReference>
<dbReference type="HOGENOM" id="CLU_023797_1_1_9"/>
<dbReference type="UniPathway" id="UPA00906">
    <property type="reaction ID" value="UER00895"/>
</dbReference>
<dbReference type="Proteomes" id="UP000001172">
    <property type="component" value="Chromosome"/>
</dbReference>
<dbReference type="GO" id="GO:0005737">
    <property type="term" value="C:cytoplasm"/>
    <property type="evidence" value="ECO:0007669"/>
    <property type="project" value="UniProtKB-SubCell"/>
</dbReference>
<dbReference type="GO" id="GO:0005524">
    <property type="term" value="F:ATP binding"/>
    <property type="evidence" value="ECO:0007669"/>
    <property type="project" value="UniProtKB-UniRule"/>
</dbReference>
<dbReference type="GO" id="GO:0140096">
    <property type="term" value="F:catalytic activity, acting on a protein"/>
    <property type="evidence" value="ECO:0007669"/>
    <property type="project" value="UniProtKB-ARBA"/>
</dbReference>
<dbReference type="GO" id="GO:0004828">
    <property type="term" value="F:serine-tRNA ligase activity"/>
    <property type="evidence" value="ECO:0007669"/>
    <property type="project" value="UniProtKB-UniRule"/>
</dbReference>
<dbReference type="GO" id="GO:0016740">
    <property type="term" value="F:transferase activity"/>
    <property type="evidence" value="ECO:0007669"/>
    <property type="project" value="UniProtKB-ARBA"/>
</dbReference>
<dbReference type="GO" id="GO:0016260">
    <property type="term" value="P:selenocysteine biosynthetic process"/>
    <property type="evidence" value="ECO:0007669"/>
    <property type="project" value="UniProtKB-UniRule"/>
</dbReference>
<dbReference type="GO" id="GO:0006434">
    <property type="term" value="P:seryl-tRNA aminoacylation"/>
    <property type="evidence" value="ECO:0007669"/>
    <property type="project" value="UniProtKB-UniRule"/>
</dbReference>
<dbReference type="CDD" id="cd00770">
    <property type="entry name" value="SerRS_core"/>
    <property type="match status" value="1"/>
</dbReference>
<dbReference type="Gene3D" id="3.30.930.10">
    <property type="entry name" value="Bira Bifunctional Protein, Domain 2"/>
    <property type="match status" value="1"/>
</dbReference>
<dbReference type="Gene3D" id="1.10.287.40">
    <property type="entry name" value="Serine-tRNA synthetase, tRNA binding domain"/>
    <property type="match status" value="1"/>
</dbReference>
<dbReference type="HAMAP" id="MF_00176">
    <property type="entry name" value="Ser_tRNA_synth_type1"/>
    <property type="match status" value="1"/>
</dbReference>
<dbReference type="InterPro" id="IPR002314">
    <property type="entry name" value="aa-tRNA-synt_IIb"/>
</dbReference>
<dbReference type="InterPro" id="IPR006195">
    <property type="entry name" value="aa-tRNA-synth_II"/>
</dbReference>
<dbReference type="InterPro" id="IPR045864">
    <property type="entry name" value="aa-tRNA-synth_II/BPL/LPL"/>
</dbReference>
<dbReference type="InterPro" id="IPR002317">
    <property type="entry name" value="Ser-tRNA-ligase_type_1"/>
</dbReference>
<dbReference type="InterPro" id="IPR015866">
    <property type="entry name" value="Ser-tRNA-synth_1_N"/>
</dbReference>
<dbReference type="InterPro" id="IPR042103">
    <property type="entry name" value="SerRS_1_N_sf"/>
</dbReference>
<dbReference type="InterPro" id="IPR033729">
    <property type="entry name" value="SerRS_core"/>
</dbReference>
<dbReference type="InterPro" id="IPR010978">
    <property type="entry name" value="tRNA-bd_arm"/>
</dbReference>
<dbReference type="NCBIfam" id="TIGR00414">
    <property type="entry name" value="serS"/>
    <property type="match status" value="1"/>
</dbReference>
<dbReference type="PANTHER" id="PTHR43697:SF1">
    <property type="entry name" value="SERINE--TRNA LIGASE"/>
    <property type="match status" value="1"/>
</dbReference>
<dbReference type="PANTHER" id="PTHR43697">
    <property type="entry name" value="SERYL-TRNA SYNTHETASE"/>
    <property type="match status" value="1"/>
</dbReference>
<dbReference type="Pfam" id="PF02403">
    <property type="entry name" value="Seryl_tRNA_N"/>
    <property type="match status" value="1"/>
</dbReference>
<dbReference type="Pfam" id="PF00587">
    <property type="entry name" value="tRNA-synt_2b"/>
    <property type="match status" value="1"/>
</dbReference>
<dbReference type="PIRSF" id="PIRSF001529">
    <property type="entry name" value="Ser-tRNA-synth_IIa"/>
    <property type="match status" value="1"/>
</dbReference>
<dbReference type="PRINTS" id="PR00981">
    <property type="entry name" value="TRNASYNTHSER"/>
</dbReference>
<dbReference type="SUPFAM" id="SSF55681">
    <property type="entry name" value="Class II aaRS and biotin synthetases"/>
    <property type="match status" value="1"/>
</dbReference>
<dbReference type="SUPFAM" id="SSF46589">
    <property type="entry name" value="tRNA-binding arm"/>
    <property type="match status" value="1"/>
</dbReference>
<dbReference type="PROSITE" id="PS50862">
    <property type="entry name" value="AA_TRNA_LIGASE_II"/>
    <property type="match status" value="1"/>
</dbReference>